<proteinExistence type="inferred from homology"/>
<sequence length="455" mass="49656">MGLSVVILAAGKGSRMNSNKPKVLQTLAAKTLIEHVVSSVEKLNPDNIVVVTGHLKEQVEDALQGRNITFVYQQQQLGTGHAVLQALPYLKEQKVLILYGDVPLISTEVLENLVDTTNDDDLGVLTAFVENPQGLGRIVRDKFGAVTEIVEEKDANDIQRQIKEINTGIYCVHKNLLQKWLPEIKANNVQKEYYLTDIITFAKADHVSINVTHPINEFEILGVNDRTQLASLERVWQRNVAEKIMAKGVSIADPNRFDVRGNLDVGKDCWIDINVIIKGNVKLGNNVVIGANCILKNCIIEDNVRIKSNSMVDGSIIREGAIVGPFARVRPECDVKEGAVIGNFVEAKKTILGKGSKASHLTYLGDSEIGANCNIGAGVITCNYDGVNKHKTVIGDYAFIGSDSQLIAPVNIGQGATVGAGSTIVKDVPADNLAISRARQRHIDTWQRSVKKTDK</sequence>
<evidence type="ECO:0000255" key="1">
    <source>
        <dbReference type="HAMAP-Rule" id="MF_01631"/>
    </source>
</evidence>
<feature type="chain" id="PRO_0000244292" description="Bifunctional protein GlmU">
    <location>
        <begin position="1"/>
        <end position="455"/>
    </location>
</feature>
<feature type="region of interest" description="Pyrophosphorylase" evidence="1">
    <location>
        <begin position="1"/>
        <end position="226"/>
    </location>
</feature>
<feature type="region of interest" description="Linker" evidence="1">
    <location>
        <begin position="227"/>
        <end position="247"/>
    </location>
</feature>
<feature type="region of interest" description="N-acetyltransferase" evidence="1">
    <location>
        <begin position="248"/>
        <end position="455"/>
    </location>
</feature>
<feature type="active site" description="Proton acceptor" evidence="1">
    <location>
        <position position="360"/>
    </location>
</feature>
<feature type="binding site" evidence="1">
    <location>
        <begin position="8"/>
        <end position="11"/>
    </location>
    <ligand>
        <name>UDP-N-acetyl-alpha-D-glucosamine</name>
        <dbReference type="ChEBI" id="CHEBI:57705"/>
    </ligand>
</feature>
<feature type="binding site" evidence="1">
    <location>
        <position position="22"/>
    </location>
    <ligand>
        <name>UDP-N-acetyl-alpha-D-glucosamine</name>
        <dbReference type="ChEBI" id="CHEBI:57705"/>
    </ligand>
</feature>
<feature type="binding site" evidence="1">
    <location>
        <position position="73"/>
    </location>
    <ligand>
        <name>UDP-N-acetyl-alpha-D-glucosamine</name>
        <dbReference type="ChEBI" id="CHEBI:57705"/>
    </ligand>
</feature>
<feature type="binding site" evidence="1">
    <location>
        <begin position="78"/>
        <end position="79"/>
    </location>
    <ligand>
        <name>UDP-N-acetyl-alpha-D-glucosamine</name>
        <dbReference type="ChEBI" id="CHEBI:57705"/>
    </ligand>
</feature>
<feature type="binding site" evidence="1">
    <location>
        <begin position="99"/>
        <end position="101"/>
    </location>
    <ligand>
        <name>UDP-N-acetyl-alpha-D-glucosamine</name>
        <dbReference type="ChEBI" id="CHEBI:57705"/>
    </ligand>
</feature>
<feature type="binding site" evidence="1">
    <location>
        <position position="101"/>
    </location>
    <ligand>
        <name>Mg(2+)</name>
        <dbReference type="ChEBI" id="CHEBI:18420"/>
    </ligand>
</feature>
<feature type="binding site" evidence="1">
    <location>
        <position position="136"/>
    </location>
    <ligand>
        <name>UDP-N-acetyl-alpha-D-glucosamine</name>
        <dbReference type="ChEBI" id="CHEBI:57705"/>
    </ligand>
</feature>
<feature type="binding site" evidence="1">
    <location>
        <position position="151"/>
    </location>
    <ligand>
        <name>UDP-N-acetyl-alpha-D-glucosamine</name>
        <dbReference type="ChEBI" id="CHEBI:57705"/>
    </ligand>
</feature>
<feature type="binding site" evidence="1">
    <location>
        <position position="166"/>
    </location>
    <ligand>
        <name>UDP-N-acetyl-alpha-D-glucosamine</name>
        <dbReference type="ChEBI" id="CHEBI:57705"/>
    </ligand>
</feature>
<feature type="binding site" evidence="1">
    <location>
        <position position="224"/>
    </location>
    <ligand>
        <name>Mg(2+)</name>
        <dbReference type="ChEBI" id="CHEBI:18420"/>
    </ligand>
</feature>
<feature type="binding site" evidence="1">
    <location>
        <position position="224"/>
    </location>
    <ligand>
        <name>UDP-N-acetyl-alpha-D-glucosamine</name>
        <dbReference type="ChEBI" id="CHEBI:57705"/>
    </ligand>
</feature>
<feature type="binding site" evidence="1">
    <location>
        <position position="330"/>
    </location>
    <ligand>
        <name>UDP-N-acetyl-alpha-D-glucosamine</name>
        <dbReference type="ChEBI" id="CHEBI:57705"/>
    </ligand>
</feature>
<feature type="binding site" evidence="1">
    <location>
        <position position="348"/>
    </location>
    <ligand>
        <name>UDP-N-acetyl-alpha-D-glucosamine</name>
        <dbReference type="ChEBI" id="CHEBI:57705"/>
    </ligand>
</feature>
<feature type="binding site" evidence="1">
    <location>
        <position position="363"/>
    </location>
    <ligand>
        <name>UDP-N-acetyl-alpha-D-glucosamine</name>
        <dbReference type="ChEBI" id="CHEBI:57705"/>
    </ligand>
</feature>
<feature type="binding site" evidence="1">
    <location>
        <position position="374"/>
    </location>
    <ligand>
        <name>UDP-N-acetyl-alpha-D-glucosamine</name>
        <dbReference type="ChEBI" id="CHEBI:57705"/>
    </ligand>
</feature>
<feature type="binding site" evidence="1">
    <location>
        <position position="377"/>
    </location>
    <ligand>
        <name>acetyl-CoA</name>
        <dbReference type="ChEBI" id="CHEBI:57288"/>
    </ligand>
</feature>
<feature type="binding site" evidence="1">
    <location>
        <begin position="383"/>
        <end position="384"/>
    </location>
    <ligand>
        <name>acetyl-CoA</name>
        <dbReference type="ChEBI" id="CHEBI:57288"/>
    </ligand>
</feature>
<feature type="binding site" evidence="1">
    <location>
        <position position="402"/>
    </location>
    <ligand>
        <name>acetyl-CoA</name>
        <dbReference type="ChEBI" id="CHEBI:57288"/>
    </ligand>
</feature>
<feature type="binding site" evidence="1">
    <location>
        <position position="420"/>
    </location>
    <ligand>
        <name>acetyl-CoA</name>
        <dbReference type="ChEBI" id="CHEBI:57288"/>
    </ligand>
</feature>
<feature type="binding site" evidence="1">
    <location>
        <position position="437"/>
    </location>
    <ligand>
        <name>acetyl-CoA</name>
        <dbReference type="ChEBI" id="CHEBI:57288"/>
    </ligand>
</feature>
<reference key="1">
    <citation type="submission" date="2006-03" db="EMBL/GenBank/DDBJ databases">
        <title>Complete genome sequence of Francisella tularensis LVS (Live Vaccine Strain).</title>
        <authorList>
            <person name="Chain P."/>
            <person name="Larimer F."/>
            <person name="Land M."/>
            <person name="Stilwagen S."/>
            <person name="Larsson P."/>
            <person name="Bearden S."/>
            <person name="Chu M."/>
            <person name="Oyston P."/>
            <person name="Forsman M."/>
            <person name="Andersson S."/>
            <person name="Lindler L."/>
            <person name="Titball R."/>
            <person name="Garcia E."/>
        </authorList>
    </citation>
    <scope>NUCLEOTIDE SEQUENCE [LARGE SCALE GENOMIC DNA]</scope>
    <source>
        <strain>LVS</strain>
    </source>
</reference>
<comment type="function">
    <text evidence="1">Catalyzes the last two sequential reactions in the de novo biosynthetic pathway for UDP-N-acetylglucosamine (UDP-GlcNAc). The C-terminal domain catalyzes the transfer of acetyl group from acetyl coenzyme A to glucosamine-1-phosphate (GlcN-1-P) to produce N-acetylglucosamine-1-phosphate (GlcNAc-1-P), which is converted into UDP-GlcNAc by the transfer of uridine 5-monophosphate (from uridine 5-triphosphate), a reaction catalyzed by the N-terminal domain.</text>
</comment>
<comment type="catalytic activity">
    <reaction evidence="1">
        <text>alpha-D-glucosamine 1-phosphate + acetyl-CoA = N-acetyl-alpha-D-glucosamine 1-phosphate + CoA + H(+)</text>
        <dbReference type="Rhea" id="RHEA:13725"/>
        <dbReference type="ChEBI" id="CHEBI:15378"/>
        <dbReference type="ChEBI" id="CHEBI:57287"/>
        <dbReference type="ChEBI" id="CHEBI:57288"/>
        <dbReference type="ChEBI" id="CHEBI:57776"/>
        <dbReference type="ChEBI" id="CHEBI:58516"/>
        <dbReference type="EC" id="2.3.1.157"/>
    </reaction>
</comment>
<comment type="catalytic activity">
    <reaction evidence="1">
        <text>N-acetyl-alpha-D-glucosamine 1-phosphate + UTP + H(+) = UDP-N-acetyl-alpha-D-glucosamine + diphosphate</text>
        <dbReference type="Rhea" id="RHEA:13509"/>
        <dbReference type="ChEBI" id="CHEBI:15378"/>
        <dbReference type="ChEBI" id="CHEBI:33019"/>
        <dbReference type="ChEBI" id="CHEBI:46398"/>
        <dbReference type="ChEBI" id="CHEBI:57705"/>
        <dbReference type="ChEBI" id="CHEBI:57776"/>
        <dbReference type="EC" id="2.7.7.23"/>
    </reaction>
</comment>
<comment type="cofactor">
    <cofactor evidence="1">
        <name>Mg(2+)</name>
        <dbReference type="ChEBI" id="CHEBI:18420"/>
    </cofactor>
    <text evidence="1">Binds 1 Mg(2+) ion per subunit.</text>
</comment>
<comment type="pathway">
    <text evidence="1">Nucleotide-sugar biosynthesis; UDP-N-acetyl-alpha-D-glucosamine biosynthesis; N-acetyl-alpha-D-glucosamine 1-phosphate from alpha-D-glucosamine 6-phosphate (route II): step 2/2.</text>
</comment>
<comment type="pathway">
    <text evidence="1">Nucleotide-sugar biosynthesis; UDP-N-acetyl-alpha-D-glucosamine biosynthesis; UDP-N-acetyl-alpha-D-glucosamine from N-acetyl-alpha-D-glucosamine 1-phosphate: step 1/1.</text>
</comment>
<comment type="pathway">
    <text evidence="1">Bacterial outer membrane biogenesis; LPS lipid A biosynthesis.</text>
</comment>
<comment type="subunit">
    <text evidence="1">Homotrimer.</text>
</comment>
<comment type="subcellular location">
    <subcellularLocation>
        <location evidence="1">Cytoplasm</location>
    </subcellularLocation>
</comment>
<comment type="similarity">
    <text evidence="1">In the N-terminal section; belongs to the N-acetylglucosamine-1-phosphate uridyltransferase family.</text>
</comment>
<comment type="similarity">
    <text evidence="1">In the C-terminal section; belongs to the transferase hexapeptide repeat family.</text>
</comment>
<accession>Q2A4X7</accession>
<protein>
    <recommendedName>
        <fullName evidence="1">Bifunctional protein GlmU</fullName>
    </recommendedName>
    <domain>
        <recommendedName>
            <fullName evidence="1">UDP-N-acetylglucosamine pyrophosphorylase</fullName>
            <ecNumber evidence="1">2.7.7.23</ecNumber>
        </recommendedName>
        <alternativeName>
            <fullName evidence="1">N-acetylglucosamine-1-phosphate uridyltransferase</fullName>
        </alternativeName>
    </domain>
    <domain>
        <recommendedName>
            <fullName evidence="1">Glucosamine-1-phosphate N-acetyltransferase</fullName>
            <ecNumber evidence="1">2.3.1.157</ecNumber>
        </recommendedName>
    </domain>
</protein>
<name>GLMU_FRATH</name>
<gene>
    <name evidence="1" type="primary">glmU</name>
    <name type="ordered locus">FTL_0453</name>
</gene>
<keyword id="KW-0012">Acyltransferase</keyword>
<keyword id="KW-0133">Cell shape</keyword>
<keyword id="KW-0961">Cell wall biogenesis/degradation</keyword>
<keyword id="KW-0963">Cytoplasm</keyword>
<keyword id="KW-0460">Magnesium</keyword>
<keyword id="KW-0479">Metal-binding</keyword>
<keyword id="KW-0511">Multifunctional enzyme</keyword>
<keyword id="KW-0548">Nucleotidyltransferase</keyword>
<keyword id="KW-0573">Peptidoglycan synthesis</keyword>
<keyword id="KW-1185">Reference proteome</keyword>
<keyword id="KW-0677">Repeat</keyword>
<keyword id="KW-0808">Transferase</keyword>
<organism>
    <name type="scientific">Francisella tularensis subsp. holarctica (strain LVS)</name>
    <dbReference type="NCBI Taxonomy" id="376619"/>
    <lineage>
        <taxon>Bacteria</taxon>
        <taxon>Pseudomonadati</taxon>
        <taxon>Pseudomonadota</taxon>
        <taxon>Gammaproteobacteria</taxon>
        <taxon>Thiotrichales</taxon>
        <taxon>Francisellaceae</taxon>
        <taxon>Francisella</taxon>
    </lineage>
</organism>
<dbReference type="EC" id="2.7.7.23" evidence="1"/>
<dbReference type="EC" id="2.3.1.157" evidence="1"/>
<dbReference type="EMBL" id="AM233362">
    <property type="protein sequence ID" value="CAJ78893.1"/>
    <property type="molecule type" value="Genomic_DNA"/>
</dbReference>
<dbReference type="RefSeq" id="WP_003027098.1">
    <property type="nucleotide sequence ID" value="NZ_CP009694.1"/>
</dbReference>
<dbReference type="SMR" id="Q2A4X7"/>
<dbReference type="KEGG" id="ftl:FTL_0453"/>
<dbReference type="UniPathway" id="UPA00113">
    <property type="reaction ID" value="UER00532"/>
</dbReference>
<dbReference type="UniPathway" id="UPA00113">
    <property type="reaction ID" value="UER00533"/>
</dbReference>
<dbReference type="UniPathway" id="UPA00973"/>
<dbReference type="Proteomes" id="UP000001944">
    <property type="component" value="Chromosome"/>
</dbReference>
<dbReference type="GO" id="GO:0005737">
    <property type="term" value="C:cytoplasm"/>
    <property type="evidence" value="ECO:0007669"/>
    <property type="project" value="UniProtKB-SubCell"/>
</dbReference>
<dbReference type="GO" id="GO:0016020">
    <property type="term" value="C:membrane"/>
    <property type="evidence" value="ECO:0007669"/>
    <property type="project" value="GOC"/>
</dbReference>
<dbReference type="GO" id="GO:0019134">
    <property type="term" value="F:glucosamine-1-phosphate N-acetyltransferase activity"/>
    <property type="evidence" value="ECO:0007669"/>
    <property type="project" value="UniProtKB-UniRule"/>
</dbReference>
<dbReference type="GO" id="GO:0000287">
    <property type="term" value="F:magnesium ion binding"/>
    <property type="evidence" value="ECO:0007669"/>
    <property type="project" value="UniProtKB-UniRule"/>
</dbReference>
<dbReference type="GO" id="GO:0003977">
    <property type="term" value="F:UDP-N-acetylglucosamine diphosphorylase activity"/>
    <property type="evidence" value="ECO:0007669"/>
    <property type="project" value="UniProtKB-UniRule"/>
</dbReference>
<dbReference type="GO" id="GO:0000902">
    <property type="term" value="P:cell morphogenesis"/>
    <property type="evidence" value="ECO:0007669"/>
    <property type="project" value="UniProtKB-UniRule"/>
</dbReference>
<dbReference type="GO" id="GO:0071555">
    <property type="term" value="P:cell wall organization"/>
    <property type="evidence" value="ECO:0007669"/>
    <property type="project" value="UniProtKB-KW"/>
</dbReference>
<dbReference type="GO" id="GO:0009245">
    <property type="term" value="P:lipid A biosynthetic process"/>
    <property type="evidence" value="ECO:0007669"/>
    <property type="project" value="UniProtKB-UniRule"/>
</dbReference>
<dbReference type="GO" id="GO:0009252">
    <property type="term" value="P:peptidoglycan biosynthetic process"/>
    <property type="evidence" value="ECO:0007669"/>
    <property type="project" value="UniProtKB-UniRule"/>
</dbReference>
<dbReference type="GO" id="GO:0008360">
    <property type="term" value="P:regulation of cell shape"/>
    <property type="evidence" value="ECO:0007669"/>
    <property type="project" value="UniProtKB-KW"/>
</dbReference>
<dbReference type="GO" id="GO:0006048">
    <property type="term" value="P:UDP-N-acetylglucosamine biosynthetic process"/>
    <property type="evidence" value="ECO:0007669"/>
    <property type="project" value="UniProtKB-UniPathway"/>
</dbReference>
<dbReference type="CDD" id="cd02540">
    <property type="entry name" value="GT2_GlmU_N_bac"/>
    <property type="match status" value="1"/>
</dbReference>
<dbReference type="CDD" id="cd03353">
    <property type="entry name" value="LbH_GlmU_C"/>
    <property type="match status" value="1"/>
</dbReference>
<dbReference type="Gene3D" id="2.160.10.10">
    <property type="entry name" value="Hexapeptide repeat proteins"/>
    <property type="match status" value="1"/>
</dbReference>
<dbReference type="Gene3D" id="3.90.550.10">
    <property type="entry name" value="Spore Coat Polysaccharide Biosynthesis Protein SpsA, Chain A"/>
    <property type="match status" value="1"/>
</dbReference>
<dbReference type="HAMAP" id="MF_01631">
    <property type="entry name" value="GlmU"/>
    <property type="match status" value="1"/>
</dbReference>
<dbReference type="InterPro" id="IPR005882">
    <property type="entry name" value="Bifunctional_GlmU"/>
</dbReference>
<dbReference type="InterPro" id="IPR050065">
    <property type="entry name" value="GlmU-like"/>
</dbReference>
<dbReference type="InterPro" id="IPR038009">
    <property type="entry name" value="GlmU_C_LbH"/>
</dbReference>
<dbReference type="InterPro" id="IPR001451">
    <property type="entry name" value="Hexapep"/>
</dbReference>
<dbReference type="InterPro" id="IPR018357">
    <property type="entry name" value="Hexapep_transf_CS"/>
</dbReference>
<dbReference type="InterPro" id="IPR025877">
    <property type="entry name" value="MobA-like_NTP_Trfase"/>
</dbReference>
<dbReference type="InterPro" id="IPR029044">
    <property type="entry name" value="Nucleotide-diphossugar_trans"/>
</dbReference>
<dbReference type="InterPro" id="IPR011004">
    <property type="entry name" value="Trimer_LpxA-like_sf"/>
</dbReference>
<dbReference type="NCBIfam" id="TIGR01173">
    <property type="entry name" value="glmU"/>
    <property type="match status" value="1"/>
</dbReference>
<dbReference type="PANTHER" id="PTHR43584:SF3">
    <property type="entry name" value="BIFUNCTIONAL PROTEIN GLMU"/>
    <property type="match status" value="1"/>
</dbReference>
<dbReference type="PANTHER" id="PTHR43584">
    <property type="entry name" value="NUCLEOTIDYL TRANSFERASE"/>
    <property type="match status" value="1"/>
</dbReference>
<dbReference type="Pfam" id="PF00132">
    <property type="entry name" value="Hexapep"/>
    <property type="match status" value="2"/>
</dbReference>
<dbReference type="Pfam" id="PF12804">
    <property type="entry name" value="NTP_transf_3"/>
    <property type="match status" value="1"/>
</dbReference>
<dbReference type="SUPFAM" id="SSF53448">
    <property type="entry name" value="Nucleotide-diphospho-sugar transferases"/>
    <property type="match status" value="1"/>
</dbReference>
<dbReference type="SUPFAM" id="SSF51161">
    <property type="entry name" value="Trimeric LpxA-like enzymes"/>
    <property type="match status" value="1"/>
</dbReference>
<dbReference type="PROSITE" id="PS00101">
    <property type="entry name" value="HEXAPEP_TRANSFERASES"/>
    <property type="match status" value="1"/>
</dbReference>